<name>RECX_HALHL</name>
<organism>
    <name type="scientific">Halorhodospira halophila (strain DSM 244 / SL1)</name>
    <name type="common">Ectothiorhodospira halophila (strain DSM 244 / SL1)</name>
    <dbReference type="NCBI Taxonomy" id="349124"/>
    <lineage>
        <taxon>Bacteria</taxon>
        <taxon>Pseudomonadati</taxon>
        <taxon>Pseudomonadota</taxon>
        <taxon>Gammaproteobacteria</taxon>
        <taxon>Chromatiales</taxon>
        <taxon>Ectothiorhodospiraceae</taxon>
        <taxon>Halorhodospira</taxon>
    </lineage>
</organism>
<proteinExistence type="inferred from homology"/>
<comment type="function">
    <text evidence="1">Modulates RecA activity.</text>
</comment>
<comment type="subcellular location">
    <subcellularLocation>
        <location evidence="1">Cytoplasm</location>
    </subcellularLocation>
</comment>
<comment type="similarity">
    <text evidence="1">Belongs to the RecX family.</text>
</comment>
<dbReference type="EMBL" id="CP000544">
    <property type="protein sequence ID" value="ABM62418.1"/>
    <property type="molecule type" value="Genomic_DNA"/>
</dbReference>
<dbReference type="RefSeq" id="WP_011814440.1">
    <property type="nucleotide sequence ID" value="NC_008789.1"/>
</dbReference>
<dbReference type="SMR" id="A1WXK6"/>
<dbReference type="STRING" id="349124.Hhal_1654"/>
<dbReference type="KEGG" id="hha:Hhal_1654"/>
<dbReference type="eggNOG" id="COG2137">
    <property type="taxonomic scope" value="Bacteria"/>
</dbReference>
<dbReference type="HOGENOM" id="CLU_066607_3_2_6"/>
<dbReference type="OrthoDB" id="7066780at2"/>
<dbReference type="Proteomes" id="UP000000647">
    <property type="component" value="Chromosome"/>
</dbReference>
<dbReference type="GO" id="GO:0005737">
    <property type="term" value="C:cytoplasm"/>
    <property type="evidence" value="ECO:0007669"/>
    <property type="project" value="UniProtKB-SubCell"/>
</dbReference>
<dbReference type="GO" id="GO:0006282">
    <property type="term" value="P:regulation of DNA repair"/>
    <property type="evidence" value="ECO:0007669"/>
    <property type="project" value="UniProtKB-UniRule"/>
</dbReference>
<dbReference type="Gene3D" id="1.10.10.10">
    <property type="entry name" value="Winged helix-like DNA-binding domain superfamily/Winged helix DNA-binding domain"/>
    <property type="match status" value="3"/>
</dbReference>
<dbReference type="HAMAP" id="MF_01114">
    <property type="entry name" value="RecX"/>
    <property type="match status" value="1"/>
</dbReference>
<dbReference type="InterPro" id="IPR053926">
    <property type="entry name" value="RecX_HTH_1st"/>
</dbReference>
<dbReference type="InterPro" id="IPR053924">
    <property type="entry name" value="RecX_HTH_2nd"/>
</dbReference>
<dbReference type="InterPro" id="IPR053925">
    <property type="entry name" value="RecX_HTH_3rd"/>
</dbReference>
<dbReference type="InterPro" id="IPR003783">
    <property type="entry name" value="Regulatory_RecX"/>
</dbReference>
<dbReference type="InterPro" id="IPR036388">
    <property type="entry name" value="WH-like_DNA-bd_sf"/>
</dbReference>
<dbReference type="InterPro" id="IPR036390">
    <property type="entry name" value="WH_DNA-bd_sf"/>
</dbReference>
<dbReference type="NCBIfam" id="NF001065">
    <property type="entry name" value="PRK00117.5-5"/>
    <property type="match status" value="1"/>
</dbReference>
<dbReference type="PANTHER" id="PTHR33602">
    <property type="entry name" value="REGULATORY PROTEIN RECX FAMILY PROTEIN"/>
    <property type="match status" value="1"/>
</dbReference>
<dbReference type="PANTHER" id="PTHR33602:SF1">
    <property type="entry name" value="REGULATORY PROTEIN RECX FAMILY PROTEIN"/>
    <property type="match status" value="1"/>
</dbReference>
<dbReference type="Pfam" id="PF21982">
    <property type="entry name" value="RecX_HTH1"/>
    <property type="match status" value="1"/>
</dbReference>
<dbReference type="Pfam" id="PF02631">
    <property type="entry name" value="RecX_HTH2"/>
    <property type="match status" value="1"/>
</dbReference>
<dbReference type="Pfam" id="PF21981">
    <property type="entry name" value="RecX_HTH3"/>
    <property type="match status" value="1"/>
</dbReference>
<dbReference type="SUPFAM" id="SSF46785">
    <property type="entry name" value="Winged helix' DNA-binding domain"/>
    <property type="match status" value="1"/>
</dbReference>
<feature type="chain" id="PRO_1000065177" description="Regulatory protein RecX">
    <location>
        <begin position="1"/>
        <end position="161"/>
    </location>
</feature>
<keyword id="KW-0963">Cytoplasm</keyword>
<keyword id="KW-1185">Reference proteome</keyword>
<protein>
    <recommendedName>
        <fullName evidence="1">Regulatory protein RecX</fullName>
    </recommendedName>
</protein>
<accession>A1WXK6</accession>
<gene>
    <name evidence="1" type="primary">recX</name>
    <name type="ordered locus">Hhal_1654</name>
</gene>
<evidence type="ECO:0000255" key="1">
    <source>
        <dbReference type="HAMAP-Rule" id="MF_01114"/>
    </source>
</evidence>
<reference key="1">
    <citation type="submission" date="2006-12" db="EMBL/GenBank/DDBJ databases">
        <title>Complete sequence of Halorhodospira halophila SL1.</title>
        <authorList>
            <consortium name="US DOE Joint Genome Institute"/>
            <person name="Copeland A."/>
            <person name="Lucas S."/>
            <person name="Lapidus A."/>
            <person name="Barry K."/>
            <person name="Detter J.C."/>
            <person name="Glavina del Rio T."/>
            <person name="Hammon N."/>
            <person name="Israni S."/>
            <person name="Dalin E."/>
            <person name="Tice H."/>
            <person name="Pitluck S."/>
            <person name="Saunders E."/>
            <person name="Brettin T."/>
            <person name="Bruce D."/>
            <person name="Han C."/>
            <person name="Tapia R."/>
            <person name="Schmutz J."/>
            <person name="Larimer F."/>
            <person name="Land M."/>
            <person name="Hauser L."/>
            <person name="Kyrpides N."/>
            <person name="Mikhailova N."/>
            <person name="Hoff W."/>
            <person name="Richardson P."/>
        </authorList>
    </citation>
    <scope>NUCLEOTIDE SEQUENCE [LARGE SCALE GENOMIC DNA]</scope>
    <source>
        <strain>DSM 244 / SL1</strain>
    </source>
</reference>
<sequence length="161" mass="17864">MSEAGAASEAVRDAALRLLARREHTRRELAQKLARRGHDPGYVHPVLEALAEEGLLDEGRFAEVFVRSRVERGQGPVRIAQELRQRGVADGVIDEVLEDAEVDWLAQARAVRERRFGAGVPADRREALRQAQFLQRRGFTADQVRAAAAAADEDDERGPYG</sequence>